<feature type="chain" id="PRO_1000046618" description="Ribonuclease P protein component 1">
    <location>
        <begin position="1"/>
        <end position="92"/>
    </location>
</feature>
<accession>A3DNB5</accession>
<dbReference type="EC" id="3.1.26.5" evidence="1"/>
<dbReference type="EMBL" id="CP000575">
    <property type="protein sequence ID" value="ABN70125.1"/>
    <property type="molecule type" value="Genomic_DNA"/>
</dbReference>
<dbReference type="RefSeq" id="WP_011839316.1">
    <property type="nucleotide sequence ID" value="NC_009033.1"/>
</dbReference>
<dbReference type="SMR" id="A3DNB5"/>
<dbReference type="STRING" id="399550.Smar_1027"/>
<dbReference type="GeneID" id="4907917"/>
<dbReference type="KEGG" id="smr:Smar_1027"/>
<dbReference type="eggNOG" id="arCOG00784">
    <property type="taxonomic scope" value="Archaea"/>
</dbReference>
<dbReference type="HOGENOM" id="CLU_107020_3_0_2"/>
<dbReference type="OrthoDB" id="39019at2157"/>
<dbReference type="Proteomes" id="UP000000254">
    <property type="component" value="Chromosome"/>
</dbReference>
<dbReference type="GO" id="GO:0005737">
    <property type="term" value="C:cytoplasm"/>
    <property type="evidence" value="ECO:0007669"/>
    <property type="project" value="UniProtKB-SubCell"/>
</dbReference>
<dbReference type="GO" id="GO:0030677">
    <property type="term" value="C:ribonuclease P complex"/>
    <property type="evidence" value="ECO:0007669"/>
    <property type="project" value="UniProtKB-UniRule"/>
</dbReference>
<dbReference type="GO" id="GO:0004526">
    <property type="term" value="F:ribonuclease P activity"/>
    <property type="evidence" value="ECO:0007669"/>
    <property type="project" value="UniProtKB-UniRule"/>
</dbReference>
<dbReference type="GO" id="GO:0003723">
    <property type="term" value="F:RNA binding"/>
    <property type="evidence" value="ECO:0007669"/>
    <property type="project" value="InterPro"/>
</dbReference>
<dbReference type="GO" id="GO:0001682">
    <property type="term" value="P:tRNA 5'-leader removal"/>
    <property type="evidence" value="ECO:0007669"/>
    <property type="project" value="UniProtKB-UniRule"/>
</dbReference>
<dbReference type="Gene3D" id="2.30.30.210">
    <property type="entry name" value="Ribonuclease P/MRP, subunit p29"/>
    <property type="match status" value="1"/>
</dbReference>
<dbReference type="HAMAP" id="MF_00754">
    <property type="entry name" value="RNase_P_1"/>
    <property type="match status" value="1"/>
</dbReference>
<dbReference type="InterPro" id="IPR036980">
    <property type="entry name" value="RNase_P/MRP_Rpp29_sf"/>
</dbReference>
<dbReference type="InterPro" id="IPR023538">
    <property type="entry name" value="RNP1"/>
</dbReference>
<dbReference type="InterPro" id="IPR023534">
    <property type="entry name" value="Rof/RNase_P-like"/>
</dbReference>
<dbReference type="InterPro" id="IPR002730">
    <property type="entry name" value="Rpp29/RNP1"/>
</dbReference>
<dbReference type="NCBIfam" id="NF046110">
    <property type="entry name" value="RNaseP1Mthb"/>
    <property type="match status" value="1"/>
</dbReference>
<dbReference type="Pfam" id="PF01868">
    <property type="entry name" value="RNase_P-MRP_p29"/>
    <property type="match status" value="1"/>
</dbReference>
<dbReference type="SMART" id="SM00538">
    <property type="entry name" value="POP4"/>
    <property type="match status" value="1"/>
</dbReference>
<dbReference type="SUPFAM" id="SSF101744">
    <property type="entry name" value="Rof/RNase P subunit-like"/>
    <property type="match status" value="1"/>
</dbReference>
<gene>
    <name evidence="1" type="primary">rnp1</name>
    <name type="ordered locus">Smar_1027</name>
</gene>
<keyword id="KW-0963">Cytoplasm</keyword>
<keyword id="KW-0255">Endonuclease</keyword>
<keyword id="KW-0378">Hydrolase</keyword>
<keyword id="KW-0540">Nuclease</keyword>
<keyword id="KW-1185">Reference proteome</keyword>
<keyword id="KW-0819">tRNA processing</keyword>
<protein>
    <recommendedName>
        <fullName evidence="1">Ribonuclease P protein component 1</fullName>
        <shortName evidence="1">RNase P component 1</shortName>
        <ecNumber evidence="1">3.1.26.5</ecNumber>
    </recommendedName>
    <alternativeName>
        <fullName evidence="1">Rpp29</fullName>
    </alternativeName>
</protein>
<name>RNP1_STAMF</name>
<sequence>MRHTRRNIFYHELIGLRIKIIEYPDKSLVGLTGLVIDETQKTLLIETNSGRRVRVLKANGVFQFMLPNKEKVIIRGVQILGRPEDRLKNIVR</sequence>
<comment type="function">
    <text evidence="1">Part of ribonuclease P, a protein complex that generates mature tRNA molecules by cleaving their 5'-ends.</text>
</comment>
<comment type="catalytic activity">
    <reaction evidence="1">
        <text>Endonucleolytic cleavage of RNA, removing 5'-extranucleotides from tRNA precursor.</text>
        <dbReference type="EC" id="3.1.26.5"/>
    </reaction>
</comment>
<comment type="subunit">
    <text evidence="1">Consists of a catalytic RNA component and at least 4-5 protein subunits.</text>
</comment>
<comment type="subcellular location">
    <subcellularLocation>
        <location evidence="1">Cytoplasm</location>
    </subcellularLocation>
</comment>
<comment type="similarity">
    <text evidence="1">Belongs to the eukaryotic/archaeal RNase P protein component 1 family.</text>
</comment>
<proteinExistence type="inferred from homology"/>
<evidence type="ECO:0000255" key="1">
    <source>
        <dbReference type="HAMAP-Rule" id="MF_00754"/>
    </source>
</evidence>
<reference key="1">
    <citation type="journal article" date="2009" name="BMC Genomics">
        <title>The complete genome sequence of Staphylothermus marinus reveals differences in sulfur metabolism among heterotrophic Crenarchaeota.</title>
        <authorList>
            <person name="Anderson I.J."/>
            <person name="Dharmarajan L."/>
            <person name="Rodriguez J."/>
            <person name="Hooper S."/>
            <person name="Porat I."/>
            <person name="Ulrich L.E."/>
            <person name="Elkins J.G."/>
            <person name="Mavromatis K."/>
            <person name="Sun H."/>
            <person name="Land M."/>
            <person name="Lapidus A."/>
            <person name="Lucas S."/>
            <person name="Barry K."/>
            <person name="Huber H."/>
            <person name="Zhulin I.B."/>
            <person name="Whitman W.B."/>
            <person name="Mukhopadhyay B."/>
            <person name="Woese C."/>
            <person name="Bristow J."/>
            <person name="Kyrpides N."/>
        </authorList>
    </citation>
    <scope>NUCLEOTIDE SEQUENCE [LARGE SCALE GENOMIC DNA]</scope>
    <source>
        <strain>ATCC 43588 / DSM 3639 / JCM 9404 / F1</strain>
    </source>
</reference>
<reference key="2">
    <citation type="journal article" date="2009" name="Stand. Genomic Sci.">
        <title>Complete genome sequence of Staphylothermus marinus Stetter and Fiala 1986 type strain F1.</title>
        <authorList>
            <person name="Anderson I.J."/>
            <person name="Sun H."/>
            <person name="Lapidus A."/>
            <person name="Copeland A."/>
            <person name="Glavina Del Rio T."/>
            <person name="Tice H."/>
            <person name="Dalin E."/>
            <person name="Lucas S."/>
            <person name="Barry K."/>
            <person name="Land M."/>
            <person name="Richardson P."/>
            <person name="Huber H."/>
            <person name="Kyrpides N.C."/>
        </authorList>
    </citation>
    <scope>NUCLEOTIDE SEQUENCE [LARGE SCALE GENOMIC DNA]</scope>
    <source>
        <strain>ATCC 43588 / DSM 3639 / JCM 9404 / F1</strain>
    </source>
</reference>
<organism>
    <name type="scientific">Staphylothermus marinus (strain ATCC 43588 / DSM 3639 / JCM 9404 / F1)</name>
    <dbReference type="NCBI Taxonomy" id="399550"/>
    <lineage>
        <taxon>Archaea</taxon>
        <taxon>Thermoproteota</taxon>
        <taxon>Thermoprotei</taxon>
        <taxon>Desulfurococcales</taxon>
        <taxon>Desulfurococcaceae</taxon>
        <taxon>Staphylothermus</taxon>
    </lineage>
</organism>